<accession>O41804</accession>
<dbReference type="EMBL" id="U88826">
    <property type="protein sequence ID" value="AAC32660.1"/>
    <property type="molecule type" value="Genomic_DNA"/>
</dbReference>
<dbReference type="SMR" id="O41804"/>
<dbReference type="Proteomes" id="UP000128912">
    <property type="component" value="Segment"/>
</dbReference>
<dbReference type="GO" id="GO:0005576">
    <property type="term" value="C:extracellular region"/>
    <property type="evidence" value="ECO:0007669"/>
    <property type="project" value="UniProtKB-SubCell"/>
</dbReference>
<dbReference type="GO" id="GO:0044178">
    <property type="term" value="C:host cell Golgi membrane"/>
    <property type="evidence" value="ECO:0007669"/>
    <property type="project" value="UniProtKB-SubCell"/>
</dbReference>
<dbReference type="GO" id="GO:0020002">
    <property type="term" value="C:host cell plasma membrane"/>
    <property type="evidence" value="ECO:0007669"/>
    <property type="project" value="UniProtKB-SubCell"/>
</dbReference>
<dbReference type="GO" id="GO:0016020">
    <property type="term" value="C:membrane"/>
    <property type="evidence" value="ECO:0007669"/>
    <property type="project" value="UniProtKB-UniRule"/>
</dbReference>
<dbReference type="GO" id="GO:0044423">
    <property type="term" value="C:virion component"/>
    <property type="evidence" value="ECO:0007669"/>
    <property type="project" value="UniProtKB-UniRule"/>
</dbReference>
<dbReference type="GO" id="GO:0005525">
    <property type="term" value="F:GTP binding"/>
    <property type="evidence" value="ECO:0007669"/>
    <property type="project" value="UniProtKB-UniRule"/>
</dbReference>
<dbReference type="GO" id="GO:0017124">
    <property type="term" value="F:SH3 domain binding"/>
    <property type="evidence" value="ECO:0007669"/>
    <property type="project" value="UniProtKB-UniRule"/>
</dbReference>
<dbReference type="GO" id="GO:0046776">
    <property type="term" value="P:symbiont-mediated suppression of host antigen processing and presentation of peptide antigen via MHC class I"/>
    <property type="evidence" value="ECO:0007669"/>
    <property type="project" value="UniProtKB-UniRule"/>
</dbReference>
<dbReference type="GO" id="GO:0039505">
    <property type="term" value="P:symbiont-mediated suppression of host antigen processing and presentation of peptide antigen via MHC class II"/>
    <property type="evidence" value="ECO:0007669"/>
    <property type="project" value="UniProtKB-UniRule"/>
</dbReference>
<dbReference type="GO" id="GO:0140321">
    <property type="term" value="P:symbiont-mediated suppression of host autophagy"/>
    <property type="evidence" value="ECO:0007669"/>
    <property type="project" value="UniProtKB-KW"/>
</dbReference>
<dbReference type="Gene3D" id="4.10.890.10">
    <property type="entry name" value="HIV 1 nef anchor domain"/>
    <property type="match status" value="1"/>
</dbReference>
<dbReference type="Gene3D" id="3.30.62.10">
    <property type="entry name" value="Nef Regulatory Factor"/>
    <property type="match status" value="1"/>
</dbReference>
<dbReference type="HAMAP" id="MF_04078">
    <property type="entry name" value="NEF_HIV"/>
    <property type="match status" value="1"/>
</dbReference>
<dbReference type="InterPro" id="IPR027480">
    <property type="entry name" value="HIV-1_Nef_anchor_sf"/>
</dbReference>
<dbReference type="InterPro" id="IPR027481">
    <property type="entry name" value="HIV-1_Nef_core_sf"/>
</dbReference>
<dbReference type="InterPro" id="IPR001558">
    <property type="entry name" value="HIV_Nef"/>
</dbReference>
<dbReference type="Pfam" id="PF00469">
    <property type="entry name" value="F-protein"/>
    <property type="match status" value="1"/>
</dbReference>
<dbReference type="SUPFAM" id="SSF55671">
    <property type="entry name" value="Regulatory factor Nef"/>
    <property type="match status" value="1"/>
</dbReference>
<protein>
    <recommendedName>
        <fullName evidence="1">Protein Nef</fullName>
    </recommendedName>
    <alternativeName>
        <fullName evidence="1">3'ORF</fullName>
    </alternativeName>
    <alternativeName>
        <fullName evidence="1">Negative factor</fullName>
        <shortName evidence="1">F-protein</shortName>
    </alternativeName>
    <component>
        <recommendedName>
            <fullName evidence="1">C-terminal core protein</fullName>
        </recommendedName>
    </component>
</protein>
<name>NEF_HV19N</name>
<proteinExistence type="inferred from homology"/>
<organismHost>
    <name type="scientific">Homo sapiens</name>
    <name type="common">Human</name>
    <dbReference type="NCBI Taxonomy" id="9606"/>
</organismHost>
<reference key="1">
    <citation type="journal article" date="1998" name="J. Virol.">
        <title>A comprehensive panel of near-full-length clones and reference sequences for non-subtype B isolates of human immunodeficiency virus type 1.</title>
        <authorList>
            <person name="Gao F."/>
            <person name="Robertson D.L."/>
            <person name="Carruthers C.D."/>
            <person name="Morrison S.G."/>
            <person name="Jian B."/>
            <person name="Chen Y."/>
            <person name="Barre-Sinoussi F."/>
            <person name="Girard M."/>
            <person name="Srinivasan A."/>
            <person name="Abimiku A.G."/>
            <person name="Shaw G.M."/>
            <person name="Sharp P.M."/>
            <person name="Hahn B.H."/>
        </authorList>
    </citation>
    <scope>NUCLEOTIDE SEQUENCE [GENOMIC DNA]</scope>
</reference>
<comment type="function">
    <text evidence="1">Factor of infectivity and pathogenicity, required for optimal virus replication. Alters numerous pathways of T-lymphocyte function and down-regulates immunity surface molecules in order to evade host defense and increase viral infectivity. Alters the functionality of other immunity cells, like dendritic cells, monocytes/macrophages and NK cells.</text>
</comment>
<comment type="function">
    <text evidence="1">In infected CD4(+) T-lymphocytes, down-regulates the surface MHC-I, mature MHC-II, CD4, CD28, CCR5 and CXCR4 molecules. Mediates internalization and degradation of host CD4 through the interaction of with the cytoplasmic tail of CD4, the recruitment of AP-2 (clathrin adapter protein complex 2), internalization through clathrin coated pits, and subsequent transport to endosomes and lysosomes for degradation. Diverts host MHC-I molecules to the trans-Golgi network-associated endosomal compartments by an endocytic pathway to finally target them for degradation. MHC-I down-regulation may involve AP-1 (clathrin adapter protein complex 1) or possibly Src family kinase-ZAP70/Syk-PI3K cascade recruited by PACS2. In consequence infected cells are masked for immune recognition by cytotoxic T-lymphocytes. Decreasing the number of immune receptors also prevents reinfection by more HIV particles (superinfection). Down-regulates host SERINC3 and SERINC5 thereby excluding these proteins from the viral particles. Virion infectivity is drastically higher when SERINC3 or SERINC5 are excluded from the viral envelope, because these host antiviral proteins impair the membrane fusion event necessary for subsequent virion penetration.</text>
</comment>
<comment type="function">
    <text evidence="1">Bypasses host T-cell signaling by inducing a transcriptional program nearly identical to that of anti-CD3 cell activation. Interaction with TCR-zeta chain up-regulates the Fas ligand (FasL). Increasing surface FasL molecules and decreasing surface MHC-I molecules on infected CD4(+) cells send attacking cytotoxic CD8+ T-lymphocytes into apoptosis.</text>
</comment>
<comment type="function">
    <text evidence="1">Plays a role in optimizing the host cell environment for viral replication without causing cell death by apoptosis. Protects the infected cells from apoptosis in order to keep them alive until the next virus generation is ready to strike. Inhibits the Fas and TNFR-mediated death signals by blocking MAP3K5/ASK1. Decreases the half-life of TP53, protecting the infected cell against p53-mediated apoptosis. Inhibits the apoptotic signals regulated by the Bcl-2 family proteins through the formation of a Nef/PI3-kinase/PAK2 complex that leads to activation of PAK2 and induces phosphorylation of host BAD.</text>
</comment>
<comment type="function">
    <text evidence="1">Extracellular Nef protein targets CD4(+) T-lymphocytes for apoptosis by interacting with CXCR4 surface receptors.</text>
</comment>
<comment type="subunit">
    <text evidence="1">Monomer; cytosolic form. Homodimer; membrane bound form. Interacts with Nef associated p21-activated kinase (PAK2); this interaction activates PAK2. Associates with the Nef-MHC-I-AP1 complex; this complex is required for MHC-I internalization. Interacts (via C-terminus) with host PI3-kinase. Interacts with host PACS1; this interaction seems to be weak. Interacts with host PACS2. Interacts with host LCK and MAPK3; these interactions inhibit the kinase activity of the latter. Interacts with host ATP6V1H; this interaction may play a role in CD4 endocytosis. Associates with the CD4-Nef-AP2 complex; this complex is required for CD4 internalization. Interacts with host AP2 subunit alpha and AP2 subunit sigma2. Interacts with TCR-zeta chain; this interaction up-regulates the Fas ligand (FasL) surface expression. Interacts with host HCK, LYN, and SRC; these interactions activate the Src family kinases. Interacts with MAP3K5; this interaction inhibits the Fas and TNFR-mediated death signals. Interacts with beta-COP and PTE1. Interacts with human RACK1; this increases Nef phosphorylation by PKC. Interacts with TP53; this interaction decreases the half-life of TP53, protecting the infected cell against p53-mediated apoptosis.</text>
</comment>
<comment type="subcellular location">
    <subcellularLocation>
        <location evidence="1">Host cell membrane</location>
        <topology evidence="1">Lipid-anchor</topology>
        <orientation evidence="1">Cytoplasmic side</orientation>
    </subcellularLocation>
    <subcellularLocation>
        <location evidence="1">Virion</location>
    </subcellularLocation>
    <subcellularLocation>
        <location evidence="1">Secreted</location>
    </subcellularLocation>
    <subcellularLocation>
        <location evidence="1">Host Golgi apparatus membrane</location>
    </subcellularLocation>
    <text evidence="1">TGN localization requires PACS1. Associates with the inner plasma membrane through its N-terminal domain. Nef stimulates its own export via the release of exosomes. Incorporated in virions at a rate of about 10 molecules per virion, where it is cleaved.</text>
</comment>
<comment type="induction">
    <text evidence="1">Expressed early in the viral replication cycle.</text>
</comment>
<comment type="domain">
    <text evidence="1">The N-terminal domain is composed of the N-myristoyl glycine and of a cluster of positively charged amino acids. It is required for inner plasma membrane targeting of Nef and virion incorporation, and thereby for infectivity. This domain is also involved in binding to TP53.</text>
</comment>
<comment type="domain">
    <text evidence="1">The SH3-binding domain constituted of PxxP motifs mediates binding to several Src family proteins thereby regulating their tyrosine kinase activity. The same motifs also mediates the association with MAPK3, PI3-kinase and TCR-zeta.</text>
</comment>
<comment type="domain">
    <text evidence="1">The dileucine internalization motif and a diacidic motif seem to be required for binding to AP-2.</text>
</comment>
<comment type="domain">
    <text evidence="1">The acidic region binds to the sorting protein PACS-2, which targets Nef to the paranuclear region, enabling the PxxP motif to direct assembly of an SFK/ZAP-70/PI3K complex that accelerates endocytosis of cell-surface MHC-I.</text>
</comment>
<comment type="PTM">
    <text evidence="1">The virion-associated Nef proteins are cleaved by the viral protease to release the soluble C-terminal core protein. Nef is probably cleaved concomitantly with viral structural proteins on maturation of virus particles.</text>
</comment>
<comment type="PTM">
    <text evidence="1">Myristoylated.</text>
</comment>
<comment type="PTM">
    <text evidence="1">Phosphorylated on serine residues, probably by host PKCdelta and theta.</text>
</comment>
<comment type="miscellaneous">
    <text evidence="1">HIV-1 lineages are divided in three main groups, M (for Major), O (for Outlier), and N (for New, or Non-M, Non-O). The vast majority of strains found worldwide belong to the group M. Group O seems to be endemic to and largely confined to Cameroon and neighboring countries in West Central Africa, where these viruses represent a small minority of HIV-1 strains. The group N is represented by a limited number of isolates from Cameroonian persons. The group M is further subdivided in 9 clades or subtypes (A to D, F to H, J and K).</text>
</comment>
<comment type="similarity">
    <text evidence="1">Belongs to the lentivirus primate group Nef protein family.</text>
</comment>
<feature type="initiator methionine" description="Removed; by host" evidence="1">
    <location>
        <position position="1"/>
    </location>
</feature>
<feature type="chain" id="PRO_0000244787" description="Protein Nef" evidence="1">
    <location>
        <begin position="2"/>
        <end position="207"/>
    </location>
</feature>
<feature type="chain" id="PRO_0000244788" description="C-terminal core protein" evidence="1">
    <location>
        <begin position="58"/>
        <end position="207"/>
    </location>
</feature>
<feature type="region of interest" description="Acidic; interacts with host PACS1 and PACS2; stabilizes the interaction of NEF/MHC-I with host AP1M1; necessary for MHC-I internalization" evidence="1">
    <location>
        <begin position="62"/>
        <end position="66"/>
    </location>
</feature>
<feature type="region of interest" description="SH3-binding; interaction with Src family tyrosine kinases" evidence="1">
    <location>
        <begin position="70"/>
        <end position="79"/>
    </location>
</feature>
<feature type="region of interest" description="Mediates dimerization, Nef-PTE1 interaction" evidence="1">
    <location>
        <begin position="109"/>
        <end position="125"/>
    </location>
</feature>
<feature type="region of interest" description="Binding to ATP6V1H" evidence="1">
    <location>
        <begin position="149"/>
        <end position="181"/>
    </location>
</feature>
<feature type="short sequence motif" description="PxxP; stabilizes the interaction of NEF/MHC-I with host AP1M1; necessary for MHC-I internalization" evidence="1">
    <location>
        <begin position="73"/>
        <end position="76"/>
    </location>
</feature>
<feature type="short sequence motif" description="Dileucine internalization motif; necessary for CD4 internalization" evidence="1">
    <location>
        <begin position="165"/>
        <end position="166"/>
    </location>
</feature>
<feature type="short sequence motif" description="Diacidic; necessary for CD4 internalization" evidence="1">
    <location>
        <begin position="175"/>
        <end position="176"/>
    </location>
</feature>
<feature type="site" description="Cleavage; by viral protease" evidence="1">
    <location>
        <begin position="57"/>
        <end position="58"/>
    </location>
</feature>
<feature type="modified residue" description="Phosphoserine; by host" evidence="1">
    <location>
        <position position="6"/>
    </location>
</feature>
<feature type="lipid moiety-binding region" description="N-myristoyl glycine; by host" evidence="1">
    <location>
        <position position="2"/>
    </location>
</feature>
<organism>
    <name type="scientific">Human immunodeficiency virus type 1 group M subtype G (isolate 92NG083)</name>
    <name type="common">HIV-1</name>
    <dbReference type="NCBI Taxonomy" id="388825"/>
    <lineage>
        <taxon>Viruses</taxon>
        <taxon>Riboviria</taxon>
        <taxon>Pararnavirae</taxon>
        <taxon>Artverviricota</taxon>
        <taxon>Revtraviricetes</taxon>
        <taxon>Ortervirales</taxon>
        <taxon>Retroviridae</taxon>
        <taxon>Orthoretrovirinae</taxon>
        <taxon>Lentivirus</taxon>
        <taxon>Human immunodeficiency virus type 1</taxon>
    </lineage>
</organism>
<evidence type="ECO:0000255" key="1">
    <source>
        <dbReference type="HAMAP-Rule" id="MF_04078"/>
    </source>
</evidence>
<keyword id="KW-0014">AIDS</keyword>
<keyword id="KW-0053">Apoptosis</keyword>
<keyword id="KW-0244">Early protein</keyword>
<keyword id="KW-1032">Host cell membrane</keyword>
<keyword id="KW-1040">Host Golgi apparatus</keyword>
<keyword id="KW-1043">Host membrane</keyword>
<keyword id="KW-0945">Host-virus interaction</keyword>
<keyword id="KW-1080">Inhibition of host adaptive immune response by virus</keyword>
<keyword id="KW-1083">Inhibition of host autophagy by virus</keyword>
<keyword id="KW-1115">Inhibition of host MHC class I molecule presentation by virus</keyword>
<keyword id="KW-1116">Inhibition of host MHC class II molecule presentation by virus</keyword>
<keyword id="KW-0449">Lipoprotein</keyword>
<keyword id="KW-0472">Membrane</keyword>
<keyword id="KW-0519">Myristate</keyword>
<keyword id="KW-0597">Phosphoprotein</keyword>
<keyword id="KW-0964">Secreted</keyword>
<keyword id="KW-0729">SH3-binding</keyword>
<keyword id="KW-0899">Viral immunoevasion</keyword>
<keyword id="KW-0946">Virion</keyword>
<keyword id="KW-0843">Virulence</keyword>
<gene>
    <name evidence="1" type="primary">nef</name>
</gene>
<sequence>MGGKWSKSSIVGWPQIRERIRQTPVAAEGVGAVSQDLARHGAITSSNTATNNPDCAWLEAQEEDSDVGFPVRPQVPLRPMTYKAAFDLSFFLKEKGGLDGLIYSKRRQDILDLWVYNTQGFFPDWQNYTPGPGTRLPLTFGWCFKLVPMDPAEIEEANKGENISLLHPICQHGMEDEDREVLVWRFNSSLARRHLARELHPEYYKDC</sequence>